<dbReference type="EMBL" id="CP017623">
    <property type="protein sequence ID" value="AOW26658.1"/>
    <property type="molecule type" value="Genomic_DNA"/>
</dbReference>
<dbReference type="RefSeq" id="XP_723580.1">
    <property type="nucleotide sequence ID" value="XM_718487.1"/>
</dbReference>
<dbReference type="SMR" id="Q5AP65"/>
<dbReference type="FunCoup" id="Q5AP65">
    <property type="interactions" value="103"/>
</dbReference>
<dbReference type="STRING" id="237561.Q5AP65"/>
<dbReference type="EnsemblFungi" id="C1_10280C_A-T">
    <property type="protein sequence ID" value="C1_10280C_A-T-p1"/>
    <property type="gene ID" value="C1_10280C_A"/>
</dbReference>
<dbReference type="GeneID" id="3634902"/>
<dbReference type="KEGG" id="cal:CAALFM_C110280CA"/>
<dbReference type="CGD" id="CAL0000198473">
    <property type="gene designation" value="orf19.12363"/>
</dbReference>
<dbReference type="VEuPathDB" id="FungiDB:C1_10280C_A"/>
<dbReference type="eggNOG" id="KOG4039">
    <property type="taxonomic scope" value="Eukaryota"/>
</dbReference>
<dbReference type="HOGENOM" id="CLU_071330_2_2_1"/>
<dbReference type="InParanoid" id="Q5AP65"/>
<dbReference type="OMA" id="CIENAKA"/>
<dbReference type="OrthoDB" id="430436at2759"/>
<dbReference type="PRO" id="PR:Q5AP65"/>
<dbReference type="Proteomes" id="UP000000559">
    <property type="component" value="Chromosome 1"/>
</dbReference>
<dbReference type="GO" id="GO:0005737">
    <property type="term" value="C:cytoplasm"/>
    <property type="evidence" value="ECO:0000318"/>
    <property type="project" value="GO_Central"/>
</dbReference>
<dbReference type="GO" id="GO:0005741">
    <property type="term" value="C:mitochondrial outer membrane"/>
    <property type="evidence" value="ECO:0007669"/>
    <property type="project" value="UniProtKB-SubCell"/>
</dbReference>
<dbReference type="GO" id="GO:0051170">
    <property type="term" value="P:import into nucleus"/>
    <property type="evidence" value="ECO:0000318"/>
    <property type="project" value="GO_Central"/>
</dbReference>
<dbReference type="FunFam" id="3.40.50.720:FF:000366">
    <property type="entry name" value="Protein FMP52, mitochondrial"/>
    <property type="match status" value="1"/>
</dbReference>
<dbReference type="Gene3D" id="3.40.50.720">
    <property type="entry name" value="NAD(P)-binding Rossmann-like Domain"/>
    <property type="match status" value="1"/>
</dbReference>
<dbReference type="InterPro" id="IPR014843">
    <property type="entry name" value="Him1/Fmp52"/>
</dbReference>
<dbReference type="InterPro" id="IPR036291">
    <property type="entry name" value="NAD(P)-bd_dom_sf"/>
</dbReference>
<dbReference type="PANTHER" id="PTHR14097">
    <property type="entry name" value="OXIDOREDUCTASE HTATIP2"/>
    <property type="match status" value="1"/>
</dbReference>
<dbReference type="PANTHER" id="PTHR14097:SF7">
    <property type="entry name" value="OXIDOREDUCTASE HTATIP2"/>
    <property type="match status" value="1"/>
</dbReference>
<dbReference type="Pfam" id="PF08732">
    <property type="entry name" value="HIM1"/>
    <property type="match status" value="1"/>
</dbReference>
<dbReference type="SUPFAM" id="SSF51735">
    <property type="entry name" value="NAD(P)-binding Rossmann-fold domains"/>
    <property type="match status" value="1"/>
</dbReference>
<protein>
    <recommendedName>
        <fullName>Protein FMP52, mitochondrial</fullName>
    </recommendedName>
</protein>
<organism>
    <name type="scientific">Candida albicans (strain SC5314 / ATCC MYA-2876)</name>
    <name type="common">Yeast</name>
    <dbReference type="NCBI Taxonomy" id="237561"/>
    <lineage>
        <taxon>Eukaryota</taxon>
        <taxon>Fungi</taxon>
        <taxon>Dikarya</taxon>
        <taxon>Ascomycota</taxon>
        <taxon>Saccharomycotina</taxon>
        <taxon>Pichiomycetes</taxon>
        <taxon>Debaryomycetaceae</taxon>
        <taxon>Candida/Lodderomyces clade</taxon>
        <taxon>Candida</taxon>
    </lineage>
</organism>
<name>FMP52_CANAL</name>
<keyword id="KW-0472">Membrane</keyword>
<keyword id="KW-0496">Mitochondrion</keyword>
<keyword id="KW-1000">Mitochondrion outer membrane</keyword>
<keyword id="KW-1185">Reference proteome</keyword>
<keyword id="KW-0809">Transit peptide</keyword>
<evidence type="ECO:0000250" key="1"/>
<evidence type="ECO:0000305" key="2"/>
<comment type="subcellular location">
    <subcellularLocation>
        <location evidence="1">Mitochondrion outer membrane</location>
        <topology evidence="1">Peripheral membrane protein</topology>
    </subcellularLocation>
</comment>
<comment type="similarity">
    <text evidence="2">Belongs to the FMP52 family.</text>
</comment>
<sequence length="229" mass="24275">MSTFILGATGLVGSQIVKVAESSPAIKSITTLTRRTPDFANSSSKLKTLEESDSSKWSEIIKSQAVSSDVYLSAFGTTRAKAGSAENFKKIDYGINYSSAKAAKENGSKVCVLVSSMGANASSPFLYMKTKGELEDDIIKLGFDHTVILRPGALLGERKESHGLGNSIAQTIGNWTKGTWLQGLLKPIDASDVGKVAIDFAQKGINGELKDKVIIVGGDDLVKLANSLN</sequence>
<accession>Q5AP65</accession>
<accession>A0A1D8PEU7</accession>
<feature type="transit peptide" description="Mitochondrion">
    <location>
        <begin position="1"/>
        <end position="36"/>
    </location>
</feature>
<feature type="chain" id="PRO_0000301817" description="Protein FMP52, mitochondrial">
    <location>
        <begin position="37"/>
        <end position="229"/>
    </location>
</feature>
<gene>
    <name type="primary">FMP52</name>
    <name type="ordered locus">CAALFM_C110280CA</name>
    <name type="ORF">CaO19.12363</name>
    <name type="ORF">CaO19.4898</name>
</gene>
<reference key="1">
    <citation type="journal article" date="2004" name="Proc. Natl. Acad. Sci. U.S.A.">
        <title>The diploid genome sequence of Candida albicans.</title>
        <authorList>
            <person name="Jones T."/>
            <person name="Federspiel N.A."/>
            <person name="Chibana H."/>
            <person name="Dungan J."/>
            <person name="Kalman S."/>
            <person name="Magee B.B."/>
            <person name="Newport G."/>
            <person name="Thorstenson Y.R."/>
            <person name="Agabian N."/>
            <person name="Magee P.T."/>
            <person name="Davis R.W."/>
            <person name="Scherer S."/>
        </authorList>
    </citation>
    <scope>NUCLEOTIDE SEQUENCE [LARGE SCALE GENOMIC DNA]</scope>
    <source>
        <strain>SC5314 / ATCC MYA-2876</strain>
    </source>
</reference>
<reference key="2">
    <citation type="journal article" date="2007" name="Genome Biol.">
        <title>Assembly of the Candida albicans genome into sixteen supercontigs aligned on the eight chromosomes.</title>
        <authorList>
            <person name="van het Hoog M."/>
            <person name="Rast T.J."/>
            <person name="Martchenko M."/>
            <person name="Grindle S."/>
            <person name="Dignard D."/>
            <person name="Hogues H."/>
            <person name="Cuomo C."/>
            <person name="Berriman M."/>
            <person name="Scherer S."/>
            <person name="Magee B.B."/>
            <person name="Whiteway M."/>
            <person name="Chibana H."/>
            <person name="Nantel A."/>
            <person name="Magee P.T."/>
        </authorList>
    </citation>
    <scope>GENOME REANNOTATION</scope>
    <source>
        <strain>SC5314 / ATCC MYA-2876</strain>
    </source>
</reference>
<reference key="3">
    <citation type="journal article" date="2013" name="Genome Biol.">
        <title>Assembly of a phased diploid Candida albicans genome facilitates allele-specific measurements and provides a simple model for repeat and indel structure.</title>
        <authorList>
            <person name="Muzzey D."/>
            <person name="Schwartz K."/>
            <person name="Weissman J.S."/>
            <person name="Sherlock G."/>
        </authorList>
    </citation>
    <scope>NUCLEOTIDE SEQUENCE [LARGE SCALE GENOMIC DNA]</scope>
    <scope>GENOME REANNOTATION</scope>
    <source>
        <strain>SC5314 / ATCC MYA-2876</strain>
    </source>
</reference>
<proteinExistence type="inferred from homology"/>